<gene>
    <name evidence="1" type="primary">nagK</name>
    <name type="ordered locus">SeAg_B1964</name>
</gene>
<organism>
    <name type="scientific">Salmonella agona (strain SL483)</name>
    <dbReference type="NCBI Taxonomy" id="454166"/>
    <lineage>
        <taxon>Bacteria</taxon>
        <taxon>Pseudomonadati</taxon>
        <taxon>Pseudomonadota</taxon>
        <taxon>Gammaproteobacteria</taxon>
        <taxon>Enterobacterales</taxon>
        <taxon>Enterobacteriaceae</taxon>
        <taxon>Salmonella</taxon>
    </lineage>
</organism>
<proteinExistence type="inferred from homology"/>
<keyword id="KW-0067">ATP-binding</keyword>
<keyword id="KW-0119">Carbohydrate metabolism</keyword>
<keyword id="KW-0418">Kinase</keyword>
<keyword id="KW-0479">Metal-binding</keyword>
<keyword id="KW-0547">Nucleotide-binding</keyword>
<keyword id="KW-0808">Transferase</keyword>
<keyword id="KW-0862">Zinc</keyword>
<feature type="chain" id="PRO_1000140190" description="N-acetyl-D-glucosamine kinase">
    <location>
        <begin position="1"/>
        <end position="303"/>
    </location>
</feature>
<feature type="binding site" evidence="1">
    <location>
        <begin position="4"/>
        <end position="11"/>
    </location>
    <ligand>
        <name>ATP</name>
        <dbReference type="ChEBI" id="CHEBI:30616"/>
    </ligand>
</feature>
<feature type="binding site" evidence="1">
    <location>
        <begin position="133"/>
        <end position="140"/>
    </location>
    <ligand>
        <name>ATP</name>
        <dbReference type="ChEBI" id="CHEBI:30616"/>
    </ligand>
</feature>
<feature type="binding site" evidence="1">
    <location>
        <position position="157"/>
    </location>
    <ligand>
        <name>Zn(2+)</name>
        <dbReference type="ChEBI" id="CHEBI:29105"/>
    </ligand>
</feature>
<feature type="binding site" evidence="1">
    <location>
        <position position="177"/>
    </location>
    <ligand>
        <name>Zn(2+)</name>
        <dbReference type="ChEBI" id="CHEBI:29105"/>
    </ligand>
</feature>
<feature type="binding site" evidence="1">
    <location>
        <position position="179"/>
    </location>
    <ligand>
        <name>Zn(2+)</name>
        <dbReference type="ChEBI" id="CHEBI:29105"/>
    </ligand>
</feature>
<feature type="binding site" evidence="1">
    <location>
        <position position="184"/>
    </location>
    <ligand>
        <name>Zn(2+)</name>
        <dbReference type="ChEBI" id="CHEBI:29105"/>
    </ligand>
</feature>
<accession>B5F8D3</accession>
<evidence type="ECO:0000255" key="1">
    <source>
        <dbReference type="HAMAP-Rule" id="MF_01271"/>
    </source>
</evidence>
<reference key="1">
    <citation type="journal article" date="2011" name="J. Bacteriol.">
        <title>Comparative genomics of 28 Salmonella enterica isolates: evidence for CRISPR-mediated adaptive sublineage evolution.</title>
        <authorList>
            <person name="Fricke W.F."/>
            <person name="Mammel M.K."/>
            <person name="McDermott P.F."/>
            <person name="Tartera C."/>
            <person name="White D.G."/>
            <person name="Leclerc J.E."/>
            <person name="Ravel J."/>
            <person name="Cebula T.A."/>
        </authorList>
    </citation>
    <scope>NUCLEOTIDE SEQUENCE [LARGE SCALE GENOMIC DNA]</scope>
    <source>
        <strain>SL483</strain>
    </source>
</reference>
<protein>
    <recommendedName>
        <fullName evidence="1">N-acetyl-D-glucosamine kinase</fullName>
        <ecNumber evidence="1">2.7.1.59</ecNumber>
    </recommendedName>
    <alternativeName>
        <fullName evidence="1">GlcNAc kinase</fullName>
    </alternativeName>
</protein>
<dbReference type="EC" id="2.7.1.59" evidence="1"/>
<dbReference type="EMBL" id="CP001138">
    <property type="protein sequence ID" value="ACH51099.1"/>
    <property type="molecule type" value="Genomic_DNA"/>
</dbReference>
<dbReference type="RefSeq" id="WP_000291330.1">
    <property type="nucleotide sequence ID" value="NC_011149.1"/>
</dbReference>
<dbReference type="SMR" id="B5F8D3"/>
<dbReference type="KEGG" id="sea:SeAg_B1964"/>
<dbReference type="HOGENOM" id="CLU_036604_0_3_6"/>
<dbReference type="UniPathway" id="UPA00544"/>
<dbReference type="Proteomes" id="UP000008819">
    <property type="component" value="Chromosome"/>
</dbReference>
<dbReference type="GO" id="GO:0005524">
    <property type="term" value="F:ATP binding"/>
    <property type="evidence" value="ECO:0007669"/>
    <property type="project" value="UniProtKB-UniRule"/>
</dbReference>
<dbReference type="GO" id="GO:0045127">
    <property type="term" value="F:N-acetylglucosamine kinase activity"/>
    <property type="evidence" value="ECO:0007669"/>
    <property type="project" value="UniProtKB-UniRule"/>
</dbReference>
<dbReference type="GO" id="GO:0008270">
    <property type="term" value="F:zinc ion binding"/>
    <property type="evidence" value="ECO:0007669"/>
    <property type="project" value="UniProtKB-UniRule"/>
</dbReference>
<dbReference type="GO" id="GO:0006044">
    <property type="term" value="P:N-acetylglucosamine metabolic process"/>
    <property type="evidence" value="ECO:0007669"/>
    <property type="project" value="UniProtKB-UniRule"/>
</dbReference>
<dbReference type="GO" id="GO:0009254">
    <property type="term" value="P:peptidoglycan turnover"/>
    <property type="evidence" value="ECO:0007669"/>
    <property type="project" value="UniProtKB-UniRule"/>
</dbReference>
<dbReference type="CDD" id="cd24057">
    <property type="entry name" value="ASKHA_NBD_ROK_NAGK"/>
    <property type="match status" value="1"/>
</dbReference>
<dbReference type="FunFam" id="3.30.420.40:FF:000049">
    <property type="entry name" value="N-acetyl-D-glucosamine kinase"/>
    <property type="match status" value="1"/>
</dbReference>
<dbReference type="FunFam" id="3.30.420.40:FF:000051">
    <property type="entry name" value="N-acetyl-D-glucosamine kinase"/>
    <property type="match status" value="1"/>
</dbReference>
<dbReference type="Gene3D" id="3.30.420.40">
    <property type="match status" value="2"/>
</dbReference>
<dbReference type="HAMAP" id="MF_01271">
    <property type="entry name" value="GlcNAc_kinase"/>
    <property type="match status" value="1"/>
</dbReference>
<dbReference type="InterPro" id="IPR043129">
    <property type="entry name" value="ATPase_NBD"/>
</dbReference>
<dbReference type="InterPro" id="IPR023505">
    <property type="entry name" value="N-acetyl-D-glucosamine_kinase"/>
</dbReference>
<dbReference type="InterPro" id="IPR000600">
    <property type="entry name" value="ROK"/>
</dbReference>
<dbReference type="InterPro" id="IPR049874">
    <property type="entry name" value="ROK_cs"/>
</dbReference>
<dbReference type="NCBIfam" id="NF009835">
    <property type="entry name" value="PRK13310.1"/>
    <property type="match status" value="1"/>
</dbReference>
<dbReference type="PANTHER" id="PTHR18964:SF162">
    <property type="entry name" value="N-ACETYL-D-GLUCOSAMINE KINASE"/>
    <property type="match status" value="1"/>
</dbReference>
<dbReference type="PANTHER" id="PTHR18964">
    <property type="entry name" value="ROK (REPRESSOR, ORF, KINASE) FAMILY"/>
    <property type="match status" value="1"/>
</dbReference>
<dbReference type="Pfam" id="PF00480">
    <property type="entry name" value="ROK"/>
    <property type="match status" value="1"/>
</dbReference>
<dbReference type="SUPFAM" id="SSF53067">
    <property type="entry name" value="Actin-like ATPase domain"/>
    <property type="match status" value="1"/>
</dbReference>
<dbReference type="PROSITE" id="PS01125">
    <property type="entry name" value="ROK"/>
    <property type="match status" value="1"/>
</dbReference>
<sequence length="303" mass="33002">MYYGFDIGGTKIALGVFDSTRRLQWEKRVPTPHTSYSAFLDAVCELVAEADQRFGVKGSVGIGIPGMPETEDGTLYAANVPAASGKPLRADLSARLDRDVRLDNDANCFALSEAWDDEFTQYPLVMGLILGTGVGGGLVLNGKPITGQSYITGEFGHMRLPVDALTLMGFDFPLRRCGCGQMGCIENYLSGRGFAWLYQHYYDQSLQAPEIIALWEQGDEQAHAHVERYLDLLAVCLGNILTIVDPDLLVIGGGLSNFTAITTQLAERLPRHLLPVARAPRIERARHGDAGGMRGAAFLHLTD</sequence>
<name>NAGK_SALA4</name>
<comment type="function">
    <text evidence="1">Catalyzes the phosphorylation of N-acetyl-D-glucosamine (GlcNAc) derived from cell-wall degradation, yielding GlcNAc-6-P.</text>
</comment>
<comment type="catalytic activity">
    <reaction evidence="1">
        <text>N-acetyl-D-glucosamine + ATP = N-acetyl-D-glucosamine 6-phosphate + ADP + H(+)</text>
        <dbReference type="Rhea" id="RHEA:17417"/>
        <dbReference type="ChEBI" id="CHEBI:15378"/>
        <dbReference type="ChEBI" id="CHEBI:30616"/>
        <dbReference type="ChEBI" id="CHEBI:57513"/>
        <dbReference type="ChEBI" id="CHEBI:456216"/>
        <dbReference type="ChEBI" id="CHEBI:506227"/>
        <dbReference type="EC" id="2.7.1.59"/>
    </reaction>
</comment>
<comment type="pathway">
    <text evidence="1">Cell wall biogenesis; peptidoglycan recycling.</text>
</comment>
<comment type="similarity">
    <text evidence="1">Belongs to the ROK (NagC/XylR) family. NagK subfamily.</text>
</comment>